<proteinExistence type="inferred from homology"/>
<comment type="catalytic activity">
    <reaction>
        <text>ATP + H2O = ADP + phosphate + H(+)</text>
        <dbReference type="Rhea" id="RHEA:13065"/>
        <dbReference type="ChEBI" id="CHEBI:15377"/>
        <dbReference type="ChEBI" id="CHEBI:15378"/>
        <dbReference type="ChEBI" id="CHEBI:30616"/>
        <dbReference type="ChEBI" id="CHEBI:43474"/>
        <dbReference type="ChEBI" id="CHEBI:456216"/>
        <dbReference type="EC" id="3.6.4.13"/>
    </reaction>
</comment>
<comment type="domain">
    <text>The Q motif is unique to and characteristic of the DEAD box family of RNA helicases and controls ATP binding and hydrolysis.</text>
</comment>
<comment type="similarity">
    <text evidence="4">Belongs to the DEAD box helicase family. DDX3/DED1 subfamily.</text>
</comment>
<reference key="1">
    <citation type="journal article" date="2005" name="BMC Biol.">
        <title>The sequence of rice chromosomes 11 and 12, rich in disease resistance genes and recent gene duplications.</title>
        <authorList>
            <consortium name="The rice chromosomes 11 and 12 sequencing consortia"/>
        </authorList>
    </citation>
    <scope>NUCLEOTIDE SEQUENCE [LARGE SCALE GENOMIC DNA]</scope>
    <source>
        <strain>cv. Nipponbare</strain>
    </source>
</reference>
<reference key="2">
    <citation type="journal article" date="2005" name="Nature">
        <title>The map-based sequence of the rice genome.</title>
        <authorList>
            <consortium name="International rice genome sequencing project (IRGSP)"/>
        </authorList>
    </citation>
    <scope>NUCLEOTIDE SEQUENCE [LARGE SCALE GENOMIC DNA]</scope>
    <source>
        <strain>cv. Nipponbare</strain>
    </source>
</reference>
<reference key="3">
    <citation type="journal article" date="2008" name="Nucleic Acids Res.">
        <title>The rice annotation project database (RAP-DB): 2008 update.</title>
        <authorList>
            <consortium name="The rice annotation project (RAP)"/>
        </authorList>
    </citation>
    <scope>GENOME REANNOTATION</scope>
    <source>
        <strain>cv. Nipponbare</strain>
    </source>
</reference>
<reference key="4">
    <citation type="journal article" date="2013" name="Rice">
        <title>Improvement of the Oryza sativa Nipponbare reference genome using next generation sequence and optical map data.</title>
        <authorList>
            <person name="Kawahara Y."/>
            <person name="de la Bastide M."/>
            <person name="Hamilton J.P."/>
            <person name="Kanamori H."/>
            <person name="McCombie W.R."/>
            <person name="Ouyang S."/>
            <person name="Schwartz D.C."/>
            <person name="Tanaka T."/>
            <person name="Wu J."/>
            <person name="Zhou S."/>
            <person name="Childs K.L."/>
            <person name="Davidson R.M."/>
            <person name="Lin H."/>
            <person name="Quesada-Ocampo L."/>
            <person name="Vaillancourt B."/>
            <person name="Sakai H."/>
            <person name="Lee S.S."/>
            <person name="Kim J."/>
            <person name="Numa H."/>
            <person name="Itoh T."/>
            <person name="Buell C.R."/>
            <person name="Matsumoto T."/>
        </authorList>
    </citation>
    <scope>GENOME REANNOTATION</scope>
    <source>
        <strain>cv. Nipponbare</strain>
    </source>
</reference>
<gene>
    <name type="ordered locus">Os11g0599500</name>
    <name type="ordered locus">LOC_Os11g38670</name>
</gene>
<evidence type="ECO:0000255" key="1">
    <source>
        <dbReference type="PROSITE-ProRule" id="PRU00541"/>
    </source>
</evidence>
<evidence type="ECO:0000255" key="2">
    <source>
        <dbReference type="PROSITE-ProRule" id="PRU00542"/>
    </source>
</evidence>
<evidence type="ECO:0000256" key="3">
    <source>
        <dbReference type="SAM" id="MobiDB-lite"/>
    </source>
</evidence>
<evidence type="ECO:0000305" key="4"/>
<keyword id="KW-0067">ATP-binding</keyword>
<keyword id="KW-0347">Helicase</keyword>
<keyword id="KW-0378">Hydrolase</keyword>
<keyword id="KW-0547">Nucleotide-binding</keyword>
<keyword id="KW-1185">Reference proteome</keyword>
<keyword id="KW-0694">RNA-binding</keyword>
<organism>
    <name type="scientific">Oryza sativa subsp. japonica</name>
    <name type="common">Rice</name>
    <dbReference type="NCBI Taxonomy" id="39947"/>
    <lineage>
        <taxon>Eukaryota</taxon>
        <taxon>Viridiplantae</taxon>
        <taxon>Streptophyta</taxon>
        <taxon>Embryophyta</taxon>
        <taxon>Tracheophyta</taxon>
        <taxon>Spermatophyta</taxon>
        <taxon>Magnoliopsida</taxon>
        <taxon>Liliopsida</taxon>
        <taxon>Poales</taxon>
        <taxon>Poaceae</taxon>
        <taxon>BOP clade</taxon>
        <taxon>Oryzoideae</taxon>
        <taxon>Oryzeae</taxon>
        <taxon>Oryzinae</taxon>
        <taxon>Oryza</taxon>
        <taxon>Oryza sativa</taxon>
    </lineage>
</organism>
<feature type="chain" id="PRO_0000282452" description="DEAD-box ATP-dependent RNA helicase 52C">
    <location>
        <begin position="1"/>
        <end position="623"/>
    </location>
</feature>
<feature type="domain" description="Helicase ATP-binding" evidence="1">
    <location>
        <begin position="186"/>
        <end position="372"/>
    </location>
</feature>
<feature type="domain" description="Helicase C-terminal" evidence="2">
    <location>
        <begin position="399"/>
        <end position="550"/>
    </location>
</feature>
<feature type="region of interest" description="Disordered" evidence="3">
    <location>
        <begin position="1"/>
        <end position="120"/>
    </location>
</feature>
<feature type="region of interest" description="Disordered" evidence="3">
    <location>
        <begin position="553"/>
        <end position="595"/>
    </location>
</feature>
<feature type="short sequence motif" description="Q motif">
    <location>
        <begin position="155"/>
        <end position="183"/>
    </location>
</feature>
<feature type="short sequence motif" description="DEAD box">
    <location>
        <begin position="316"/>
        <end position="319"/>
    </location>
</feature>
<feature type="compositionally biased region" description="Low complexity" evidence="3">
    <location>
        <begin position="10"/>
        <end position="29"/>
    </location>
</feature>
<feature type="compositionally biased region" description="Pro residues" evidence="3">
    <location>
        <begin position="54"/>
        <end position="69"/>
    </location>
</feature>
<feature type="compositionally biased region" description="Low complexity" evidence="3">
    <location>
        <begin position="70"/>
        <end position="83"/>
    </location>
</feature>
<feature type="compositionally biased region" description="Gly residues" evidence="3">
    <location>
        <begin position="84"/>
        <end position="97"/>
    </location>
</feature>
<feature type="compositionally biased region" description="Gly residues" evidence="3">
    <location>
        <begin position="555"/>
        <end position="571"/>
    </location>
</feature>
<feature type="compositionally biased region" description="Basic and acidic residues" evidence="3">
    <location>
        <begin position="572"/>
        <end position="581"/>
    </location>
</feature>
<feature type="compositionally biased region" description="Gly residues" evidence="3">
    <location>
        <begin position="583"/>
        <end position="595"/>
    </location>
</feature>
<feature type="binding site" evidence="1">
    <location>
        <begin position="199"/>
        <end position="206"/>
    </location>
    <ligand>
        <name>ATP</name>
        <dbReference type="ChEBI" id="CHEBI:30616"/>
    </ligand>
</feature>
<name>RH52C_ORYSJ</name>
<accession>Q2R1M8</accession>
<accession>A0A0P0Y426</accession>
<sequence>MATPSRTSWADVADADPAPAPAPAANGPARPDRSSYVPPHLRNRGASSGGGAAAPPPSSSSSSAPPPRAAPGLLAPRPAAAGMGRMGGGGGGGGFGGPRRWDREPNPFGNDGDAAAGAGDEPEVFDAHQNTGINFDAYEDIPVETSGREVPPPVGTFAEIDLGQALNDNIRRCKYVRPTPVQRYAIPISLAGRDLMACAQTGSGKTAAFCFPIISGIMRGPPAQRPQRGGMRTACPLALILSPTRELSMQIHEEARKFSYQTGVRVVVAYGGAPINQQLRDLERGVDILVATPGRLVDLLERARVSLQSIRYLALDEADRMLDMGFEPQVRRIVEQMDMPPPGARQTMLFSATFPKEIQRMASDFLENYIFLAVGRVGSSTDLIVQRVEFVQEADKRSHLMDLLHAQRDSATPGKPTLTLVFVETKRGADSLEHWLCMNGFPATSIHGDRNQQEREYALRSFKSGHTPILVATDVAARGLDIPHVAHVVNFDLPNDIDDYVHRIGRTGRAGKSGLATAFFNENNSSMARSLAELMQESNQEVPAWLSRYAARPSYGGGGGRNRRSGGGSRFGGRDFRRDSSSGRGGGDYYGGGSSGGAGGYGGSSAYGGGGYGGGAGAPSAWD</sequence>
<protein>
    <recommendedName>
        <fullName>DEAD-box ATP-dependent RNA helicase 52C</fullName>
        <ecNumber>3.6.4.13</ecNumber>
    </recommendedName>
</protein>
<dbReference type="EC" id="3.6.4.13"/>
<dbReference type="EMBL" id="DP000010">
    <property type="protein sequence ID" value="ABA94715.1"/>
    <property type="molecule type" value="Genomic_DNA"/>
</dbReference>
<dbReference type="EMBL" id="AP008217">
    <property type="protein sequence ID" value="BAF28584.1"/>
    <property type="molecule type" value="Genomic_DNA"/>
</dbReference>
<dbReference type="EMBL" id="AP014967">
    <property type="protein sequence ID" value="BAT14744.1"/>
    <property type="molecule type" value="Genomic_DNA"/>
</dbReference>
<dbReference type="RefSeq" id="XP_015617825.1">
    <property type="nucleotide sequence ID" value="XM_015762339.1"/>
</dbReference>
<dbReference type="SMR" id="Q2R1M8"/>
<dbReference type="FunCoup" id="Q2R1M8">
    <property type="interactions" value="1681"/>
</dbReference>
<dbReference type="STRING" id="39947.Q2R1M8"/>
<dbReference type="PaxDb" id="39947-Q2R1M8"/>
<dbReference type="EnsemblPlants" id="Os11t0599500-00">
    <property type="protein sequence ID" value="Os11t0599500-00"/>
    <property type="gene ID" value="Os11g0599500"/>
</dbReference>
<dbReference type="Gramene" id="Os11t0599500-00">
    <property type="protein sequence ID" value="Os11t0599500-00"/>
    <property type="gene ID" value="Os11g0599500"/>
</dbReference>
<dbReference type="KEGG" id="dosa:Os11g0599500"/>
<dbReference type="eggNOG" id="KOG0335">
    <property type="taxonomic scope" value="Eukaryota"/>
</dbReference>
<dbReference type="HOGENOM" id="CLU_003041_16_3_1"/>
<dbReference type="InParanoid" id="Q2R1M8"/>
<dbReference type="OMA" id="SYAGMQP"/>
<dbReference type="OrthoDB" id="196131at2759"/>
<dbReference type="Proteomes" id="UP000000763">
    <property type="component" value="Chromosome 11"/>
</dbReference>
<dbReference type="Proteomes" id="UP000059680">
    <property type="component" value="Chromosome 11"/>
</dbReference>
<dbReference type="GO" id="GO:0005634">
    <property type="term" value="C:nucleus"/>
    <property type="evidence" value="ECO:0000318"/>
    <property type="project" value="GO_Central"/>
</dbReference>
<dbReference type="GO" id="GO:0005524">
    <property type="term" value="F:ATP binding"/>
    <property type="evidence" value="ECO:0007669"/>
    <property type="project" value="UniProtKB-KW"/>
</dbReference>
<dbReference type="GO" id="GO:0016887">
    <property type="term" value="F:ATP hydrolysis activity"/>
    <property type="evidence" value="ECO:0007669"/>
    <property type="project" value="RHEA"/>
</dbReference>
<dbReference type="GO" id="GO:0003729">
    <property type="term" value="F:mRNA binding"/>
    <property type="evidence" value="ECO:0000318"/>
    <property type="project" value="GO_Central"/>
</dbReference>
<dbReference type="GO" id="GO:0003724">
    <property type="term" value="F:RNA helicase activity"/>
    <property type="evidence" value="ECO:0000318"/>
    <property type="project" value="GO_Central"/>
</dbReference>
<dbReference type="CDD" id="cd17967">
    <property type="entry name" value="DEADc_DDX3_DDX4"/>
    <property type="match status" value="1"/>
</dbReference>
<dbReference type="CDD" id="cd18787">
    <property type="entry name" value="SF2_C_DEAD"/>
    <property type="match status" value="1"/>
</dbReference>
<dbReference type="FunFam" id="3.40.50.300:FF:000008">
    <property type="entry name" value="ATP-dependent RNA helicase RhlB"/>
    <property type="match status" value="1"/>
</dbReference>
<dbReference type="FunFam" id="3.40.50.300:FF:000397">
    <property type="entry name" value="Probable ATP-dependent RNA helicase DDX4"/>
    <property type="match status" value="1"/>
</dbReference>
<dbReference type="Gene3D" id="3.40.50.300">
    <property type="entry name" value="P-loop containing nucleotide triphosphate hydrolases"/>
    <property type="match status" value="2"/>
</dbReference>
<dbReference type="InterPro" id="IPR011545">
    <property type="entry name" value="DEAD/DEAH_box_helicase_dom"/>
</dbReference>
<dbReference type="InterPro" id="IPR044763">
    <property type="entry name" value="Ded1/Dbp1_DEADc"/>
</dbReference>
<dbReference type="InterPro" id="IPR014001">
    <property type="entry name" value="Helicase_ATP-bd"/>
</dbReference>
<dbReference type="InterPro" id="IPR001650">
    <property type="entry name" value="Helicase_C-like"/>
</dbReference>
<dbReference type="InterPro" id="IPR027417">
    <property type="entry name" value="P-loop_NTPase"/>
</dbReference>
<dbReference type="InterPro" id="IPR014014">
    <property type="entry name" value="RNA_helicase_DEAD_Q_motif"/>
</dbReference>
<dbReference type="PANTHER" id="PTHR47958">
    <property type="entry name" value="ATP-DEPENDENT RNA HELICASE DBP3"/>
    <property type="match status" value="1"/>
</dbReference>
<dbReference type="Pfam" id="PF00270">
    <property type="entry name" value="DEAD"/>
    <property type="match status" value="1"/>
</dbReference>
<dbReference type="Pfam" id="PF00271">
    <property type="entry name" value="Helicase_C"/>
    <property type="match status" value="1"/>
</dbReference>
<dbReference type="SMART" id="SM00487">
    <property type="entry name" value="DEXDc"/>
    <property type="match status" value="1"/>
</dbReference>
<dbReference type="SMART" id="SM00490">
    <property type="entry name" value="HELICc"/>
    <property type="match status" value="1"/>
</dbReference>
<dbReference type="SUPFAM" id="SSF52540">
    <property type="entry name" value="P-loop containing nucleoside triphosphate hydrolases"/>
    <property type="match status" value="1"/>
</dbReference>
<dbReference type="PROSITE" id="PS51192">
    <property type="entry name" value="HELICASE_ATP_BIND_1"/>
    <property type="match status" value="1"/>
</dbReference>
<dbReference type="PROSITE" id="PS51194">
    <property type="entry name" value="HELICASE_CTER"/>
    <property type="match status" value="1"/>
</dbReference>
<dbReference type="PROSITE" id="PS51195">
    <property type="entry name" value="Q_MOTIF"/>
    <property type="match status" value="1"/>
</dbReference>